<name>RCN2_YEAST</name>
<proteinExistence type="evidence at protein level"/>
<feature type="chain" id="PRO_0000237641" description="Regulator of calcineurin 2">
    <location>
        <begin position="1"/>
        <end position="265"/>
    </location>
</feature>
<feature type="region of interest" description="Disordered" evidence="1">
    <location>
        <begin position="127"/>
        <end position="213"/>
    </location>
</feature>
<feature type="region of interest" description="Disordered" evidence="1">
    <location>
        <begin position="242"/>
        <end position="265"/>
    </location>
</feature>
<feature type="compositionally biased region" description="Low complexity" evidence="1">
    <location>
        <begin position="141"/>
        <end position="161"/>
    </location>
</feature>
<feature type="compositionally biased region" description="Low complexity" evidence="1">
    <location>
        <begin position="182"/>
        <end position="202"/>
    </location>
</feature>
<feature type="modified residue" description="Phosphoserine" evidence="5 7">
    <location>
        <position position="104"/>
    </location>
</feature>
<feature type="modified residue" description="Phosphoserine" evidence="6 7">
    <location>
        <position position="110"/>
    </location>
</feature>
<feature type="modified residue" description="Phosphothreonine" evidence="5 6 7">
    <location>
        <position position="132"/>
    </location>
</feature>
<feature type="modified residue" description="Phosphoserine" evidence="5 7">
    <location>
        <position position="152"/>
    </location>
</feature>
<feature type="modified residue" description="Phosphoserine" evidence="7">
    <location>
        <position position="157"/>
    </location>
</feature>
<feature type="modified residue" description="Phosphoserine" evidence="5 7">
    <location>
        <position position="160"/>
    </location>
</feature>
<feature type="modified residue" description="Phosphoserine" evidence="4 5 7">
    <location>
        <position position="183"/>
    </location>
</feature>
<feature type="modified residue" description="Phosphoserine" evidence="7">
    <location>
        <position position="187"/>
    </location>
</feature>
<feature type="modified residue" description="Phosphoserine" evidence="6 7">
    <location>
        <position position="193"/>
    </location>
</feature>
<feature type="modified residue" description="Phosphoserine" evidence="7">
    <location>
        <position position="201"/>
    </location>
</feature>
<feature type="modified residue" description="Phosphoserine" evidence="6 7">
    <location>
        <position position="255"/>
    </location>
</feature>
<accession>Q12044</accession>
<accession>D6W2S5</accession>
<keyword id="KW-0963">Cytoplasm</keyword>
<keyword id="KW-0597">Phosphoprotein</keyword>
<keyword id="KW-1185">Reference proteome</keyword>
<reference key="1">
    <citation type="journal article" date="1996" name="Yeast">
        <title>Sequence and analysis of a 33 kb fragment from the right arm of chromosome XV of the yeast Saccharomyces cerevisiae.</title>
        <authorList>
            <person name="Galisson F."/>
            <person name="Dujon B."/>
        </authorList>
    </citation>
    <scope>NUCLEOTIDE SEQUENCE [GENOMIC DNA]</scope>
    <source>
        <strain>ATCC 96604 / S288c / FY1679</strain>
    </source>
</reference>
<reference key="2">
    <citation type="journal article" date="1997" name="Nature">
        <title>The nucleotide sequence of Saccharomyces cerevisiae chromosome XV.</title>
        <authorList>
            <person name="Dujon B."/>
            <person name="Albermann K."/>
            <person name="Aldea M."/>
            <person name="Alexandraki D."/>
            <person name="Ansorge W."/>
            <person name="Arino J."/>
            <person name="Benes V."/>
            <person name="Bohn C."/>
            <person name="Bolotin-Fukuhara M."/>
            <person name="Bordonne R."/>
            <person name="Boyer J."/>
            <person name="Camasses A."/>
            <person name="Casamayor A."/>
            <person name="Casas C."/>
            <person name="Cheret G."/>
            <person name="Cziepluch C."/>
            <person name="Daignan-Fornier B."/>
            <person name="Dang V.-D."/>
            <person name="de Haan M."/>
            <person name="Delius H."/>
            <person name="Durand P."/>
            <person name="Fairhead C."/>
            <person name="Feldmann H."/>
            <person name="Gaillon L."/>
            <person name="Galisson F."/>
            <person name="Gamo F.-J."/>
            <person name="Gancedo C."/>
            <person name="Goffeau A."/>
            <person name="Goulding S.E."/>
            <person name="Grivell L.A."/>
            <person name="Habbig B."/>
            <person name="Hand N.J."/>
            <person name="Hani J."/>
            <person name="Hattenhorst U."/>
            <person name="Hebling U."/>
            <person name="Hernando Y."/>
            <person name="Herrero E."/>
            <person name="Heumann K."/>
            <person name="Hiesel R."/>
            <person name="Hilger F."/>
            <person name="Hofmann B."/>
            <person name="Hollenberg C.P."/>
            <person name="Hughes B."/>
            <person name="Jauniaux J.-C."/>
            <person name="Kalogeropoulos A."/>
            <person name="Katsoulou C."/>
            <person name="Kordes E."/>
            <person name="Lafuente M.J."/>
            <person name="Landt O."/>
            <person name="Louis E.J."/>
            <person name="Maarse A.C."/>
            <person name="Madania A."/>
            <person name="Mannhaupt G."/>
            <person name="Marck C."/>
            <person name="Martin R.P."/>
            <person name="Mewes H.-W."/>
            <person name="Michaux G."/>
            <person name="Paces V."/>
            <person name="Parle-McDermott A.G."/>
            <person name="Pearson B.M."/>
            <person name="Perrin A."/>
            <person name="Pettersson B."/>
            <person name="Poch O."/>
            <person name="Pohl T.M."/>
            <person name="Poirey R."/>
            <person name="Portetelle D."/>
            <person name="Pujol A."/>
            <person name="Purnelle B."/>
            <person name="Ramezani Rad M."/>
            <person name="Rechmann S."/>
            <person name="Schwager C."/>
            <person name="Schweizer M."/>
            <person name="Sor F."/>
            <person name="Sterky F."/>
            <person name="Tarassov I.A."/>
            <person name="Teodoru C."/>
            <person name="Tettelin H."/>
            <person name="Thierry A."/>
            <person name="Tobiasch E."/>
            <person name="Tzermia M."/>
            <person name="Uhlen M."/>
            <person name="Unseld M."/>
            <person name="Valens M."/>
            <person name="Vandenbol M."/>
            <person name="Vetter I."/>
            <person name="Vlcek C."/>
            <person name="Voet M."/>
            <person name="Volckaert G."/>
            <person name="Voss H."/>
            <person name="Wambutt R."/>
            <person name="Wedler H."/>
            <person name="Wiemann S."/>
            <person name="Winsor B."/>
            <person name="Wolfe K.H."/>
            <person name="Zollner A."/>
            <person name="Zumstein E."/>
            <person name="Kleine K."/>
        </authorList>
    </citation>
    <scope>NUCLEOTIDE SEQUENCE [LARGE SCALE GENOMIC DNA]</scope>
    <source>
        <strain>ATCC 204508 / S288c</strain>
    </source>
</reference>
<reference key="3">
    <citation type="journal article" date="2014" name="G3 (Bethesda)">
        <title>The reference genome sequence of Saccharomyces cerevisiae: Then and now.</title>
        <authorList>
            <person name="Engel S.R."/>
            <person name="Dietrich F.S."/>
            <person name="Fisk D.G."/>
            <person name="Binkley G."/>
            <person name="Balakrishnan R."/>
            <person name="Costanzo M.C."/>
            <person name="Dwight S.S."/>
            <person name="Hitz B.C."/>
            <person name="Karra K."/>
            <person name="Nash R.S."/>
            <person name="Weng S."/>
            <person name="Wong E.D."/>
            <person name="Lloyd P."/>
            <person name="Skrzypek M.S."/>
            <person name="Miyasato S.R."/>
            <person name="Simison M."/>
            <person name="Cherry J.M."/>
        </authorList>
    </citation>
    <scope>GENOME REANNOTATION</scope>
    <source>
        <strain>ATCC 204508 / S288c</strain>
    </source>
</reference>
<reference key="4">
    <citation type="journal article" date="2007" name="Genome Res.">
        <title>Approaching a complete repository of sequence-verified protein-encoding clones for Saccharomyces cerevisiae.</title>
        <authorList>
            <person name="Hu Y."/>
            <person name="Rolfs A."/>
            <person name="Bhullar B."/>
            <person name="Murthy T.V.S."/>
            <person name="Zhu C."/>
            <person name="Berger M.F."/>
            <person name="Camargo A.A."/>
            <person name="Kelley F."/>
            <person name="McCarron S."/>
            <person name="Jepson D."/>
            <person name="Richardson A."/>
            <person name="Raphael J."/>
            <person name="Moreira D."/>
            <person name="Taycher E."/>
            <person name="Zuo D."/>
            <person name="Mohr S."/>
            <person name="Kane M.F."/>
            <person name="Williamson J."/>
            <person name="Simpson A.J.G."/>
            <person name="Bulyk M.L."/>
            <person name="Harlow E."/>
            <person name="Marsischky G."/>
            <person name="Kolodner R.D."/>
            <person name="LaBaer J."/>
        </authorList>
    </citation>
    <scope>NUCLEOTIDE SEQUENCE [GENOMIC DNA]</scope>
    <source>
        <strain>ATCC 204508 / S288c</strain>
    </source>
</reference>
<reference key="5">
    <citation type="journal article" date="2003" name="Nature">
        <title>Global analysis of protein localization in budding yeast.</title>
        <authorList>
            <person name="Huh W.-K."/>
            <person name="Falvo J.V."/>
            <person name="Gerke L.C."/>
            <person name="Carroll A.S."/>
            <person name="Howson R.W."/>
            <person name="Weissman J.S."/>
            <person name="O'Shea E.K."/>
        </authorList>
    </citation>
    <scope>SUBCELLULAR LOCATION [LARGE SCALE ANALYSIS]</scope>
</reference>
<reference key="6">
    <citation type="journal article" date="2003" name="Nature">
        <title>Global analysis of protein expression in yeast.</title>
        <authorList>
            <person name="Ghaemmaghami S."/>
            <person name="Huh W.-K."/>
            <person name="Bower K."/>
            <person name="Howson R.W."/>
            <person name="Belle A."/>
            <person name="Dephoure N."/>
            <person name="O'Shea E.K."/>
            <person name="Weissman J.S."/>
        </authorList>
    </citation>
    <scope>LEVEL OF PROTEIN EXPRESSION [LARGE SCALE ANALYSIS]</scope>
</reference>
<reference key="7">
    <citation type="journal article" date="2005" name="Mol. Cell. Proteomics">
        <title>Quantitative phosphoproteomics applied to the yeast pheromone signaling pathway.</title>
        <authorList>
            <person name="Gruhler A."/>
            <person name="Olsen J.V."/>
            <person name="Mohammed S."/>
            <person name="Mortensen P."/>
            <person name="Faergeman N.J."/>
            <person name="Mann M."/>
            <person name="Jensen O.N."/>
        </authorList>
    </citation>
    <scope>PHOSPHORYLATION [LARGE SCALE ANALYSIS] AT SER-183</scope>
    <scope>IDENTIFICATION BY MASS SPECTROMETRY [LARGE SCALE ANALYSIS]</scope>
    <source>
        <strain>YAL6B</strain>
    </source>
</reference>
<reference key="8">
    <citation type="journal article" date="2007" name="J. Proteome Res.">
        <title>Large-scale phosphorylation analysis of alpha-factor-arrested Saccharomyces cerevisiae.</title>
        <authorList>
            <person name="Li X."/>
            <person name="Gerber S.A."/>
            <person name="Rudner A.D."/>
            <person name="Beausoleil S.A."/>
            <person name="Haas W."/>
            <person name="Villen J."/>
            <person name="Elias J.E."/>
            <person name="Gygi S.P."/>
        </authorList>
    </citation>
    <scope>PHOSPHORYLATION [LARGE SCALE ANALYSIS] AT SER-104; THR-132; SER-152; SER-160 AND SER-183</scope>
    <scope>IDENTIFICATION BY MASS SPECTROMETRY [LARGE SCALE ANALYSIS]</scope>
    <source>
        <strain>ADR376</strain>
    </source>
</reference>
<reference key="9">
    <citation type="journal article" date="2008" name="Mol. Cell. Proteomics">
        <title>A multidimensional chromatography technology for in-depth phosphoproteome analysis.</title>
        <authorList>
            <person name="Albuquerque C.P."/>
            <person name="Smolka M.B."/>
            <person name="Payne S.H."/>
            <person name="Bafna V."/>
            <person name="Eng J."/>
            <person name="Zhou H."/>
        </authorList>
    </citation>
    <scope>PHOSPHORYLATION [LARGE SCALE ANALYSIS] AT SER-110; THR-132; SER-193 AND SER-255</scope>
    <scope>IDENTIFICATION BY MASS SPECTROMETRY [LARGE SCALE ANALYSIS]</scope>
</reference>
<reference key="10">
    <citation type="journal article" date="2009" name="Science">
        <title>Global analysis of Cdk1 substrate phosphorylation sites provides insights into evolution.</title>
        <authorList>
            <person name="Holt L.J."/>
            <person name="Tuch B.B."/>
            <person name="Villen J."/>
            <person name="Johnson A.D."/>
            <person name="Gygi S.P."/>
            <person name="Morgan D.O."/>
        </authorList>
    </citation>
    <scope>PHOSPHORYLATION [LARGE SCALE ANALYSIS] AT SER-104; SER-110; THR-132; SER-152; SER-157; SER-160; SER-183; SER-187; SER-193; SER-201 AND SER-255</scope>
    <scope>IDENTIFICATION BY MASS SPECTROMETRY [LARGE SCALE ANALYSIS]</scope>
</reference>
<comment type="subcellular location">
    <subcellularLocation>
        <location evidence="2">Cytoplasm</location>
    </subcellularLocation>
</comment>
<comment type="PTM">
    <text>Phosphorylation of Ser-152 and Ser-160 is induced 2-fold in response to mating pheromone.</text>
</comment>
<comment type="miscellaneous">
    <text evidence="3">Present with 967 molecules/cell in log phase SD medium.</text>
</comment>
<sequence>MANQKQMRTQILITDIPSGKFTSKWPTQLEKTLFKEQFPNLQSHLQYYTPLPFLNRIIIIFDNEDDTLQVFKFLQELLAKENSGPMKLFVTESLLNNQHPRSRSTDDAVSLQDNNLALLEDHRNKPLLSINTDPGVTGVDSSSLNKGGSSLSPDKSSLESPTMLKLSTDSKPFSYQEPLPKLSRSSSSTSNLSLNRSSQTSLPSQLENKDKSASGTKCLFASKPLGLTIDTSTRSNAASCTENDVNATASNPPKSPSITVNEFFH</sequence>
<organism>
    <name type="scientific">Saccharomyces cerevisiae (strain ATCC 204508 / S288c)</name>
    <name type="common">Baker's yeast</name>
    <dbReference type="NCBI Taxonomy" id="559292"/>
    <lineage>
        <taxon>Eukaryota</taxon>
        <taxon>Fungi</taxon>
        <taxon>Dikarya</taxon>
        <taxon>Ascomycota</taxon>
        <taxon>Saccharomycotina</taxon>
        <taxon>Saccharomycetes</taxon>
        <taxon>Saccharomycetales</taxon>
        <taxon>Saccharomycetaceae</taxon>
        <taxon>Saccharomyces</taxon>
    </lineage>
</organism>
<gene>
    <name type="primary">RCN2</name>
    <name type="synonym">WSP1</name>
    <name type="ordered locus">YOR220W</name>
    <name type="ORF">YOR50-10</name>
</gene>
<evidence type="ECO:0000256" key="1">
    <source>
        <dbReference type="SAM" id="MobiDB-lite"/>
    </source>
</evidence>
<evidence type="ECO:0000269" key="2">
    <source>
    </source>
</evidence>
<evidence type="ECO:0000269" key="3">
    <source>
    </source>
</evidence>
<evidence type="ECO:0007744" key="4">
    <source>
    </source>
</evidence>
<evidence type="ECO:0007744" key="5">
    <source>
    </source>
</evidence>
<evidence type="ECO:0007744" key="6">
    <source>
    </source>
</evidence>
<evidence type="ECO:0007744" key="7">
    <source>
    </source>
</evidence>
<dbReference type="EMBL" id="X92441">
    <property type="protein sequence ID" value="CAA63183.1"/>
    <property type="molecule type" value="Genomic_DNA"/>
</dbReference>
<dbReference type="EMBL" id="Z75128">
    <property type="protein sequence ID" value="CAA99438.1"/>
    <property type="molecule type" value="Genomic_DNA"/>
</dbReference>
<dbReference type="EMBL" id="AY557757">
    <property type="protein sequence ID" value="AAS56083.1"/>
    <property type="molecule type" value="Genomic_DNA"/>
</dbReference>
<dbReference type="EMBL" id="BK006948">
    <property type="protein sequence ID" value="DAA10991.1"/>
    <property type="molecule type" value="Genomic_DNA"/>
</dbReference>
<dbReference type="PIR" id="S60947">
    <property type="entry name" value="S60947"/>
</dbReference>
<dbReference type="RefSeq" id="NP_014863.1">
    <property type="nucleotide sequence ID" value="NM_001183639.1"/>
</dbReference>
<dbReference type="BioGRID" id="34614">
    <property type="interactions" value="84"/>
</dbReference>
<dbReference type="DIP" id="DIP-1996N"/>
<dbReference type="FunCoup" id="Q12044">
    <property type="interactions" value="147"/>
</dbReference>
<dbReference type="IntAct" id="Q12044">
    <property type="interactions" value="12"/>
</dbReference>
<dbReference type="MINT" id="Q12044"/>
<dbReference type="STRING" id="4932.YOR220W"/>
<dbReference type="GlyGen" id="Q12044">
    <property type="glycosylation" value="1 site, 1 O-linked glycan (1 site)"/>
</dbReference>
<dbReference type="iPTMnet" id="Q12044"/>
<dbReference type="PaxDb" id="4932-YOR220W"/>
<dbReference type="PeptideAtlas" id="Q12044"/>
<dbReference type="EnsemblFungi" id="YOR220W_mRNA">
    <property type="protein sequence ID" value="YOR220W"/>
    <property type="gene ID" value="YOR220W"/>
</dbReference>
<dbReference type="GeneID" id="854395"/>
<dbReference type="KEGG" id="sce:YOR220W"/>
<dbReference type="AGR" id="SGD:S000005746"/>
<dbReference type="SGD" id="S000005746">
    <property type="gene designation" value="RCN2"/>
</dbReference>
<dbReference type="VEuPathDB" id="FungiDB:YOR220W"/>
<dbReference type="eggNOG" id="ENOG502S1FA">
    <property type="taxonomic scope" value="Eukaryota"/>
</dbReference>
<dbReference type="HOGENOM" id="CLU_085163_0_0_1"/>
<dbReference type="InParanoid" id="Q12044"/>
<dbReference type="OMA" id="YYTPLAF"/>
<dbReference type="OrthoDB" id="4069757at2759"/>
<dbReference type="BioCyc" id="YEAST:G3O-33720-MONOMER"/>
<dbReference type="BioGRID-ORCS" id="854395">
    <property type="hits" value="4 hits in 10 CRISPR screens"/>
</dbReference>
<dbReference type="PRO" id="PR:Q12044"/>
<dbReference type="Proteomes" id="UP000002311">
    <property type="component" value="Chromosome XV"/>
</dbReference>
<dbReference type="RNAct" id="Q12044">
    <property type="molecule type" value="protein"/>
</dbReference>
<dbReference type="GO" id="GO:0005737">
    <property type="term" value="C:cytoplasm"/>
    <property type="evidence" value="ECO:0007005"/>
    <property type="project" value="SGD"/>
</dbReference>
<protein>
    <recommendedName>
        <fullName>Regulator of calcineurin 2</fullName>
    </recommendedName>
    <alternativeName>
        <fullName>Weak suppressor of PAT1 ts protein 1</fullName>
    </alternativeName>
</protein>